<keyword id="KW-0436">Ligase</keyword>
<protein>
    <recommendedName>
        <fullName evidence="1">Crotonobetaine/carnitine--CoA ligase</fullName>
        <ecNumber evidence="1">6.2.1.48</ecNumber>
    </recommendedName>
</protein>
<proteinExistence type="inferred from homology"/>
<feature type="chain" id="PRO_0000292722" description="Crotonobetaine/carnitine--CoA ligase">
    <location>
        <begin position="1"/>
        <end position="510"/>
    </location>
</feature>
<dbReference type="EC" id="6.2.1.48" evidence="1"/>
<dbReference type="EMBL" id="CP000266">
    <property type="protein sequence ID" value="ABF02319.1"/>
    <property type="molecule type" value="Genomic_DNA"/>
</dbReference>
<dbReference type="SMR" id="Q0T8F7"/>
<dbReference type="KEGG" id="sfv:SFV_0031"/>
<dbReference type="HOGENOM" id="CLU_000022_59_0_6"/>
<dbReference type="UniPathway" id="UPA00117"/>
<dbReference type="Proteomes" id="UP000000659">
    <property type="component" value="Chromosome"/>
</dbReference>
<dbReference type="GO" id="GO:0051108">
    <property type="term" value="F:carnitine-CoA ligase activity"/>
    <property type="evidence" value="ECO:0007669"/>
    <property type="project" value="InterPro"/>
</dbReference>
<dbReference type="GO" id="GO:0051109">
    <property type="term" value="F:crotonobetaine-CoA ligase activity"/>
    <property type="evidence" value="ECO:0007669"/>
    <property type="project" value="InterPro"/>
</dbReference>
<dbReference type="GO" id="GO:0031956">
    <property type="term" value="F:medium-chain fatty acid-CoA ligase activity"/>
    <property type="evidence" value="ECO:0007669"/>
    <property type="project" value="TreeGrafter"/>
</dbReference>
<dbReference type="GO" id="GO:0009437">
    <property type="term" value="P:carnitine metabolic process"/>
    <property type="evidence" value="ECO:0007669"/>
    <property type="project" value="UniProtKB-UniRule"/>
</dbReference>
<dbReference type="GO" id="GO:0006631">
    <property type="term" value="P:fatty acid metabolic process"/>
    <property type="evidence" value="ECO:0007669"/>
    <property type="project" value="TreeGrafter"/>
</dbReference>
<dbReference type="CDD" id="cd05934">
    <property type="entry name" value="FACL_DitJ_like"/>
    <property type="match status" value="1"/>
</dbReference>
<dbReference type="FunFam" id="3.40.50.12780:FF:000017">
    <property type="entry name" value="Crotonobetaine/carnitine--CoA ligase"/>
    <property type="match status" value="1"/>
</dbReference>
<dbReference type="Gene3D" id="3.30.300.30">
    <property type="match status" value="1"/>
</dbReference>
<dbReference type="Gene3D" id="3.40.50.12780">
    <property type="entry name" value="N-terminal domain of ligase-like"/>
    <property type="match status" value="1"/>
</dbReference>
<dbReference type="HAMAP" id="MF_01524">
    <property type="entry name" value="CaiC"/>
    <property type="match status" value="1"/>
</dbReference>
<dbReference type="InterPro" id="IPR025110">
    <property type="entry name" value="AMP-bd_C"/>
</dbReference>
<dbReference type="InterPro" id="IPR045851">
    <property type="entry name" value="AMP-bd_C_sf"/>
</dbReference>
<dbReference type="InterPro" id="IPR020845">
    <property type="entry name" value="AMP-binding_CS"/>
</dbReference>
<dbReference type="InterPro" id="IPR000873">
    <property type="entry name" value="AMP-dep_synth/lig_dom"/>
</dbReference>
<dbReference type="InterPro" id="IPR042099">
    <property type="entry name" value="ANL_N_sf"/>
</dbReference>
<dbReference type="InterPro" id="IPR023456">
    <property type="entry name" value="CaiC"/>
</dbReference>
<dbReference type="NCBIfam" id="NF005947">
    <property type="entry name" value="PRK08008.1"/>
    <property type="match status" value="1"/>
</dbReference>
<dbReference type="PANTHER" id="PTHR43201">
    <property type="entry name" value="ACYL-COA SYNTHETASE"/>
    <property type="match status" value="1"/>
</dbReference>
<dbReference type="PANTHER" id="PTHR43201:SF5">
    <property type="entry name" value="MEDIUM-CHAIN ACYL-COA LIGASE ACSF2, MITOCHONDRIAL"/>
    <property type="match status" value="1"/>
</dbReference>
<dbReference type="Pfam" id="PF00501">
    <property type="entry name" value="AMP-binding"/>
    <property type="match status" value="1"/>
</dbReference>
<dbReference type="Pfam" id="PF13193">
    <property type="entry name" value="AMP-binding_C"/>
    <property type="match status" value="1"/>
</dbReference>
<dbReference type="SUPFAM" id="SSF56801">
    <property type="entry name" value="Acetyl-CoA synthetase-like"/>
    <property type="match status" value="1"/>
</dbReference>
<dbReference type="PROSITE" id="PS00455">
    <property type="entry name" value="AMP_BINDING"/>
    <property type="match status" value="1"/>
</dbReference>
<name>CAIC_SHIF8</name>
<gene>
    <name evidence="1" type="primary">caiC</name>
    <name type="ordered locus">SFV_0031</name>
</gene>
<sequence length="510" mass="57906">MDIIGGQHLRQMWDDLADVYGHKTALICESSGGVVNRYSYLELNQEINRTANLFYTLGIRKGNKVALHLDNCPEFIFCWFGLAKIGAIMVPINARLLREESEWILQNSQACLLVTSAQFYPMYQQIQQEDATQLRHICLTDVALPADDGVSSFTQLKNQQPATLCYAPPLSTDDTAEILFTSGTTSRPKGVVITHYNLRFAGYYSAWQCALRDDDVYMTVMPAFHIDCQCTAAMAAFSAGATFVLVEKYSARAFWGQAQKYRATITECIPMMIRTLMVQPPSANDRQHRLREVMFYLNLSEQEKDAFCERFGVRLLTSYGMTETIVGIIGDRPSDKRRWPSIGRAGFCYEAEIRDDHNRPLPAGEIGEICIKGVPGKTIFKEYFLNPKATAKVLEADGWLHTGDTGYRDEEGFFYFVDRRCNMIKRGGENVSCVELENIIATHPKIQDIVVVGIKDSIRDEAIKAFVVLNEGETLSEEEFFRFCDKIWRNLKCPLIWRSEKICHVIARGK</sequence>
<comment type="function">
    <text evidence="1">Catalyzes the transfer of CoA to carnitine, generating the initial carnitinyl-CoA needed for the CaiB reaction cycle. Also has activity toward crotonobetaine and gamma-butyrobetaine.</text>
</comment>
<comment type="catalytic activity">
    <reaction evidence="1">
        <text>4-(trimethylamino)butanoate + ATP + CoA = 4-(trimethylamino)butanoyl-CoA + AMP + diphosphate</text>
        <dbReference type="Rhea" id="RHEA:55960"/>
        <dbReference type="ChEBI" id="CHEBI:16244"/>
        <dbReference type="ChEBI" id="CHEBI:30616"/>
        <dbReference type="ChEBI" id="CHEBI:33019"/>
        <dbReference type="ChEBI" id="CHEBI:57287"/>
        <dbReference type="ChEBI" id="CHEBI:61513"/>
        <dbReference type="ChEBI" id="CHEBI:456215"/>
        <dbReference type="EC" id="6.2.1.48"/>
    </reaction>
</comment>
<comment type="catalytic activity">
    <reaction evidence="1">
        <text>crotonobetaine + ATP + CoA = crotonobetainyl-CoA + AMP + diphosphate</text>
        <dbReference type="Rhea" id="RHEA:30079"/>
        <dbReference type="ChEBI" id="CHEBI:17237"/>
        <dbReference type="ChEBI" id="CHEBI:30616"/>
        <dbReference type="ChEBI" id="CHEBI:33019"/>
        <dbReference type="ChEBI" id="CHEBI:57287"/>
        <dbReference type="ChEBI" id="CHEBI:60933"/>
        <dbReference type="ChEBI" id="CHEBI:456215"/>
        <dbReference type="EC" id="6.2.1.48"/>
    </reaction>
</comment>
<comment type="catalytic activity">
    <reaction evidence="1">
        <text>(R)-carnitine + ATP + CoA = (R)-carnitinyl-CoA + AMP + diphosphate</text>
        <dbReference type="Rhea" id="RHEA:28514"/>
        <dbReference type="ChEBI" id="CHEBI:16347"/>
        <dbReference type="ChEBI" id="CHEBI:30616"/>
        <dbReference type="ChEBI" id="CHEBI:33019"/>
        <dbReference type="ChEBI" id="CHEBI:57287"/>
        <dbReference type="ChEBI" id="CHEBI:60932"/>
        <dbReference type="ChEBI" id="CHEBI:456215"/>
        <dbReference type="EC" id="6.2.1.48"/>
    </reaction>
</comment>
<comment type="pathway">
    <text evidence="1">Amine and polyamine metabolism; carnitine metabolism.</text>
</comment>
<comment type="similarity">
    <text evidence="1">Belongs to the ATP-dependent AMP-binding enzyme family.</text>
</comment>
<evidence type="ECO:0000255" key="1">
    <source>
        <dbReference type="HAMAP-Rule" id="MF_01524"/>
    </source>
</evidence>
<accession>Q0T8F7</accession>
<organism>
    <name type="scientific">Shigella flexneri serotype 5b (strain 8401)</name>
    <dbReference type="NCBI Taxonomy" id="373384"/>
    <lineage>
        <taxon>Bacteria</taxon>
        <taxon>Pseudomonadati</taxon>
        <taxon>Pseudomonadota</taxon>
        <taxon>Gammaproteobacteria</taxon>
        <taxon>Enterobacterales</taxon>
        <taxon>Enterobacteriaceae</taxon>
        <taxon>Shigella</taxon>
    </lineage>
</organism>
<reference key="1">
    <citation type="journal article" date="2006" name="BMC Genomics">
        <title>Complete genome sequence of Shigella flexneri 5b and comparison with Shigella flexneri 2a.</title>
        <authorList>
            <person name="Nie H."/>
            <person name="Yang F."/>
            <person name="Zhang X."/>
            <person name="Yang J."/>
            <person name="Chen L."/>
            <person name="Wang J."/>
            <person name="Xiong Z."/>
            <person name="Peng J."/>
            <person name="Sun L."/>
            <person name="Dong J."/>
            <person name="Xue Y."/>
            <person name="Xu X."/>
            <person name="Chen S."/>
            <person name="Yao Z."/>
            <person name="Shen Y."/>
            <person name="Jin Q."/>
        </authorList>
    </citation>
    <scope>NUCLEOTIDE SEQUENCE [LARGE SCALE GENOMIC DNA]</scope>
    <source>
        <strain>8401</strain>
    </source>
</reference>